<feature type="chain" id="PRO_1000087844" description="Proline--tRNA ligase">
    <location>
        <begin position="1"/>
        <end position="603"/>
    </location>
</feature>
<gene>
    <name evidence="1" type="primary">proS</name>
    <name type="ordered locus">MAE_44180</name>
</gene>
<proteinExistence type="inferred from homology"/>
<keyword id="KW-0030">Aminoacyl-tRNA synthetase</keyword>
<keyword id="KW-0067">ATP-binding</keyword>
<keyword id="KW-0963">Cytoplasm</keyword>
<keyword id="KW-0436">Ligase</keyword>
<keyword id="KW-0547">Nucleotide-binding</keyword>
<keyword id="KW-0648">Protein biosynthesis</keyword>
<evidence type="ECO:0000255" key="1">
    <source>
        <dbReference type="HAMAP-Rule" id="MF_01569"/>
    </source>
</evidence>
<accession>B0JTD7</accession>
<reference key="1">
    <citation type="journal article" date="2007" name="DNA Res.">
        <title>Complete genomic structure of the bloom-forming toxic cyanobacterium Microcystis aeruginosa NIES-843.</title>
        <authorList>
            <person name="Kaneko T."/>
            <person name="Nakajima N."/>
            <person name="Okamoto S."/>
            <person name="Suzuki I."/>
            <person name="Tanabe Y."/>
            <person name="Tamaoki M."/>
            <person name="Nakamura Y."/>
            <person name="Kasai F."/>
            <person name="Watanabe A."/>
            <person name="Kawashima K."/>
            <person name="Kishida Y."/>
            <person name="Ono A."/>
            <person name="Shimizu Y."/>
            <person name="Takahashi C."/>
            <person name="Minami C."/>
            <person name="Fujishiro T."/>
            <person name="Kohara M."/>
            <person name="Katoh M."/>
            <person name="Nakazaki N."/>
            <person name="Nakayama S."/>
            <person name="Yamada M."/>
            <person name="Tabata S."/>
            <person name="Watanabe M.M."/>
        </authorList>
    </citation>
    <scope>NUCLEOTIDE SEQUENCE [LARGE SCALE GENOMIC DNA]</scope>
    <source>
        <strain>NIES-843 / IAM M-247</strain>
    </source>
</reference>
<dbReference type="EC" id="6.1.1.15" evidence="1"/>
<dbReference type="EMBL" id="AP009552">
    <property type="protein sequence ID" value="BAG04240.1"/>
    <property type="molecule type" value="Genomic_DNA"/>
</dbReference>
<dbReference type="RefSeq" id="WP_012267037.1">
    <property type="nucleotide sequence ID" value="NC_010296.1"/>
</dbReference>
<dbReference type="SMR" id="B0JTD7"/>
<dbReference type="STRING" id="449447.MAE_44180"/>
<dbReference type="PaxDb" id="449447-MAE_44180"/>
<dbReference type="EnsemblBacteria" id="BAG04240">
    <property type="protein sequence ID" value="BAG04240"/>
    <property type="gene ID" value="MAE_44180"/>
</dbReference>
<dbReference type="KEGG" id="mar:MAE_44180"/>
<dbReference type="PATRIC" id="fig|449447.4.peg.4007"/>
<dbReference type="eggNOG" id="COG0442">
    <property type="taxonomic scope" value="Bacteria"/>
</dbReference>
<dbReference type="HOGENOM" id="CLU_016739_0_0_3"/>
<dbReference type="BioCyc" id="MAER449447:MAE_RS19150-MONOMER"/>
<dbReference type="Proteomes" id="UP000001510">
    <property type="component" value="Chromosome"/>
</dbReference>
<dbReference type="GO" id="GO:0005829">
    <property type="term" value="C:cytosol"/>
    <property type="evidence" value="ECO:0007669"/>
    <property type="project" value="TreeGrafter"/>
</dbReference>
<dbReference type="GO" id="GO:0002161">
    <property type="term" value="F:aminoacyl-tRNA deacylase activity"/>
    <property type="evidence" value="ECO:0007669"/>
    <property type="project" value="InterPro"/>
</dbReference>
<dbReference type="GO" id="GO:0005524">
    <property type="term" value="F:ATP binding"/>
    <property type="evidence" value="ECO:0007669"/>
    <property type="project" value="UniProtKB-UniRule"/>
</dbReference>
<dbReference type="GO" id="GO:0004827">
    <property type="term" value="F:proline-tRNA ligase activity"/>
    <property type="evidence" value="ECO:0007669"/>
    <property type="project" value="UniProtKB-UniRule"/>
</dbReference>
<dbReference type="GO" id="GO:0006433">
    <property type="term" value="P:prolyl-tRNA aminoacylation"/>
    <property type="evidence" value="ECO:0007669"/>
    <property type="project" value="UniProtKB-UniRule"/>
</dbReference>
<dbReference type="CDD" id="cd04334">
    <property type="entry name" value="ProRS-INS"/>
    <property type="match status" value="1"/>
</dbReference>
<dbReference type="CDD" id="cd00861">
    <property type="entry name" value="ProRS_anticodon_short"/>
    <property type="match status" value="1"/>
</dbReference>
<dbReference type="CDD" id="cd00779">
    <property type="entry name" value="ProRS_core_prok"/>
    <property type="match status" value="1"/>
</dbReference>
<dbReference type="FunFam" id="3.40.50.800:FF:000011">
    <property type="entry name" value="Proline--tRNA ligase"/>
    <property type="match status" value="1"/>
</dbReference>
<dbReference type="Gene3D" id="3.40.50.800">
    <property type="entry name" value="Anticodon-binding domain"/>
    <property type="match status" value="1"/>
</dbReference>
<dbReference type="Gene3D" id="3.30.930.10">
    <property type="entry name" value="Bira Bifunctional Protein, Domain 2"/>
    <property type="match status" value="2"/>
</dbReference>
<dbReference type="HAMAP" id="MF_01569">
    <property type="entry name" value="Pro_tRNA_synth_type1"/>
    <property type="match status" value="1"/>
</dbReference>
<dbReference type="InterPro" id="IPR002314">
    <property type="entry name" value="aa-tRNA-synt_IIb"/>
</dbReference>
<dbReference type="InterPro" id="IPR006195">
    <property type="entry name" value="aa-tRNA-synth_II"/>
</dbReference>
<dbReference type="InterPro" id="IPR045864">
    <property type="entry name" value="aa-tRNA-synth_II/BPL/LPL"/>
</dbReference>
<dbReference type="InterPro" id="IPR004154">
    <property type="entry name" value="Anticodon-bd"/>
</dbReference>
<dbReference type="InterPro" id="IPR036621">
    <property type="entry name" value="Anticodon-bd_dom_sf"/>
</dbReference>
<dbReference type="InterPro" id="IPR002316">
    <property type="entry name" value="Pro-tRNA-ligase_IIa"/>
</dbReference>
<dbReference type="InterPro" id="IPR004500">
    <property type="entry name" value="Pro-tRNA-synth_IIa_bac-type"/>
</dbReference>
<dbReference type="InterPro" id="IPR023717">
    <property type="entry name" value="Pro-tRNA-Synthase_IIa_type1"/>
</dbReference>
<dbReference type="InterPro" id="IPR050062">
    <property type="entry name" value="Pro-tRNA_synthetase"/>
</dbReference>
<dbReference type="InterPro" id="IPR044140">
    <property type="entry name" value="ProRS_anticodon_short"/>
</dbReference>
<dbReference type="InterPro" id="IPR033730">
    <property type="entry name" value="ProRS_core_prok"/>
</dbReference>
<dbReference type="InterPro" id="IPR036754">
    <property type="entry name" value="YbaK/aa-tRNA-synt-asso_dom_sf"/>
</dbReference>
<dbReference type="InterPro" id="IPR007214">
    <property type="entry name" value="YbaK/aa-tRNA-synth-assoc-dom"/>
</dbReference>
<dbReference type="NCBIfam" id="NF006625">
    <property type="entry name" value="PRK09194.1"/>
    <property type="match status" value="1"/>
</dbReference>
<dbReference type="NCBIfam" id="TIGR00409">
    <property type="entry name" value="proS_fam_II"/>
    <property type="match status" value="1"/>
</dbReference>
<dbReference type="PANTHER" id="PTHR42753">
    <property type="entry name" value="MITOCHONDRIAL RIBOSOME PROTEIN L39/PROLYL-TRNA LIGASE FAMILY MEMBER"/>
    <property type="match status" value="1"/>
</dbReference>
<dbReference type="PANTHER" id="PTHR42753:SF2">
    <property type="entry name" value="PROLINE--TRNA LIGASE"/>
    <property type="match status" value="1"/>
</dbReference>
<dbReference type="Pfam" id="PF03129">
    <property type="entry name" value="HGTP_anticodon"/>
    <property type="match status" value="1"/>
</dbReference>
<dbReference type="Pfam" id="PF00587">
    <property type="entry name" value="tRNA-synt_2b"/>
    <property type="match status" value="1"/>
</dbReference>
<dbReference type="Pfam" id="PF04073">
    <property type="entry name" value="tRNA_edit"/>
    <property type="match status" value="1"/>
</dbReference>
<dbReference type="PRINTS" id="PR01046">
    <property type="entry name" value="TRNASYNTHPRO"/>
</dbReference>
<dbReference type="SUPFAM" id="SSF52954">
    <property type="entry name" value="Class II aaRS ABD-related"/>
    <property type="match status" value="1"/>
</dbReference>
<dbReference type="SUPFAM" id="SSF55681">
    <property type="entry name" value="Class II aaRS and biotin synthetases"/>
    <property type="match status" value="1"/>
</dbReference>
<dbReference type="SUPFAM" id="SSF55826">
    <property type="entry name" value="YbaK/ProRS associated domain"/>
    <property type="match status" value="1"/>
</dbReference>
<dbReference type="PROSITE" id="PS50862">
    <property type="entry name" value="AA_TRNA_LIGASE_II"/>
    <property type="match status" value="1"/>
</dbReference>
<name>SYP_MICAN</name>
<organism>
    <name type="scientific">Microcystis aeruginosa (strain NIES-843 / IAM M-2473)</name>
    <dbReference type="NCBI Taxonomy" id="449447"/>
    <lineage>
        <taxon>Bacteria</taxon>
        <taxon>Bacillati</taxon>
        <taxon>Cyanobacteriota</taxon>
        <taxon>Cyanophyceae</taxon>
        <taxon>Oscillatoriophycideae</taxon>
        <taxon>Chroococcales</taxon>
        <taxon>Microcystaceae</taxon>
        <taxon>Microcystis</taxon>
    </lineage>
</organism>
<protein>
    <recommendedName>
        <fullName evidence="1">Proline--tRNA ligase</fullName>
        <ecNumber evidence="1">6.1.1.15</ecNumber>
    </recommendedName>
    <alternativeName>
        <fullName evidence="1">Prolyl-tRNA synthetase</fullName>
        <shortName evidence="1">ProRS</shortName>
    </alternativeName>
</protein>
<comment type="function">
    <text evidence="1">Catalyzes the attachment of proline to tRNA(Pro) in a two-step reaction: proline is first activated by ATP to form Pro-AMP and then transferred to the acceptor end of tRNA(Pro). As ProRS can inadvertently accommodate and process non-cognate amino acids such as alanine and cysteine, to avoid such errors it has two additional distinct editing activities against alanine. One activity is designated as 'pretransfer' editing and involves the tRNA(Pro)-independent hydrolysis of activated Ala-AMP. The other activity is designated 'posttransfer' editing and involves deacylation of mischarged Ala-tRNA(Pro). The misacylated Cys-tRNA(Pro) is not edited by ProRS.</text>
</comment>
<comment type="catalytic activity">
    <reaction evidence="1">
        <text>tRNA(Pro) + L-proline + ATP = L-prolyl-tRNA(Pro) + AMP + diphosphate</text>
        <dbReference type="Rhea" id="RHEA:14305"/>
        <dbReference type="Rhea" id="RHEA-COMP:9700"/>
        <dbReference type="Rhea" id="RHEA-COMP:9702"/>
        <dbReference type="ChEBI" id="CHEBI:30616"/>
        <dbReference type="ChEBI" id="CHEBI:33019"/>
        <dbReference type="ChEBI" id="CHEBI:60039"/>
        <dbReference type="ChEBI" id="CHEBI:78442"/>
        <dbReference type="ChEBI" id="CHEBI:78532"/>
        <dbReference type="ChEBI" id="CHEBI:456215"/>
        <dbReference type="EC" id="6.1.1.15"/>
    </reaction>
</comment>
<comment type="subunit">
    <text evidence="1">Homodimer.</text>
</comment>
<comment type="subcellular location">
    <subcellularLocation>
        <location evidence="1">Cytoplasm</location>
    </subcellularLocation>
</comment>
<comment type="domain">
    <text evidence="1">Consists of three domains: the N-terminal catalytic domain, the editing domain and the C-terminal anticodon-binding domain.</text>
</comment>
<comment type="similarity">
    <text evidence="1">Belongs to the class-II aminoacyl-tRNA synthetase family. ProS type 1 subfamily.</text>
</comment>
<sequence>MRLSQQLFVTLREDPAEAEIPSHKCLVRAGYIRRIGSGIYAYLPLMWRVLQKVSQIVREEMNKAGAQECLLPQLQPAELWQESGRWDTYTKAEGIMFALTDRQNRELGLGPTHEEVITAVARDLIRSYRQLPVNLYQIQTKFRDEIRPRFGLMRGREFIMKDAYSFNLDEECLKKTYQAMDIAYRNIFRRCGLAFRAVEADSGAIGGSASQEFMVLADAGEDEVLFTADEKYAANVEKAVSLPADKVASPFKKFAKKETPNTNTIESLAKFLDCAATAIVKNVLYEVVYDSGITVLVLVSIRGDQEVNEVKLQNELVRQASRYNAKTILALKIPDAAAQQKWATKPLPLGYIGPDLEDNLLKKASDIAPQFLRIADNTVTDLENLITGANETGFHLVGANWGKDFILPELIVDLRKAQVGDRAIHDPNQTLQSARGIEVGHIFQLGYKYSQAMNAFYTNEAGESTPICMGCYGIGVSRLAQAAVEQSYDKDGIIWPVAIAPYQAIVVIPNLADAEQVKTAESLYNELNQAGIETLLDDRDERAGVKFKDADLIGIPYRIVTGKSLKSGKVELVERASKKASEVAINEVVSYLKTAISKVNASD</sequence>